<keyword id="KW-0119">Carbohydrate metabolism</keyword>
<keyword id="KW-0328">Glycosyltransferase</keyword>
<keyword id="KW-1185">Reference proteome</keyword>
<keyword id="KW-0808">Transferase</keyword>
<accession>P9WQ26</accession>
<accession>L0TE45</accession>
<accession>O53278</accession>
<accession>Q7D694</accession>
<organism>
    <name type="scientific">Mycobacterium tuberculosis (strain CDC 1551 / Oshkosh)</name>
    <dbReference type="NCBI Taxonomy" id="83331"/>
    <lineage>
        <taxon>Bacteria</taxon>
        <taxon>Bacillati</taxon>
        <taxon>Actinomycetota</taxon>
        <taxon>Actinomycetes</taxon>
        <taxon>Mycobacteriales</taxon>
        <taxon>Mycobacteriaceae</taxon>
        <taxon>Mycobacterium</taxon>
        <taxon>Mycobacterium tuberculosis complex</taxon>
    </lineage>
</organism>
<evidence type="ECO:0000250" key="1"/>
<evidence type="ECO:0000305" key="2"/>
<gene>
    <name type="ordered locus">MT3115</name>
</gene>
<proteinExistence type="inferred from homology"/>
<reference key="1">
    <citation type="journal article" date="2002" name="J. Bacteriol.">
        <title>Whole-genome comparison of Mycobacterium tuberculosis clinical and laboratory strains.</title>
        <authorList>
            <person name="Fleischmann R.D."/>
            <person name="Alland D."/>
            <person name="Eisen J.A."/>
            <person name="Carpenter L."/>
            <person name="White O."/>
            <person name="Peterson J.D."/>
            <person name="DeBoy R.T."/>
            <person name="Dodson R.J."/>
            <person name="Gwinn M.L."/>
            <person name="Haft D.H."/>
            <person name="Hickey E.K."/>
            <person name="Kolonay J.F."/>
            <person name="Nelson W.C."/>
            <person name="Umayam L.A."/>
            <person name="Ermolaeva M.D."/>
            <person name="Salzberg S.L."/>
            <person name="Delcher A."/>
            <person name="Utterback T.R."/>
            <person name="Weidman J.F."/>
            <person name="Khouri H.M."/>
            <person name="Gill J."/>
            <person name="Mikula A."/>
            <person name="Bishai W."/>
            <person name="Jacobs W.R. Jr."/>
            <person name="Venter J.C."/>
            <person name="Fraser C.M."/>
        </authorList>
    </citation>
    <scope>NUCLEOTIDE SEQUENCE [LARGE SCALE GENOMIC DNA]</scope>
    <source>
        <strain>CDC 1551 / Oshkosh</strain>
    </source>
</reference>
<feature type="chain" id="PRO_0000426849" description="Probable 1,4-alpha-glucan branching enzyme MT3115">
    <location>
        <begin position="1"/>
        <end position="526"/>
    </location>
</feature>
<feature type="active site" description="Nucleophile" evidence="1">
    <location>
        <position position="205"/>
    </location>
</feature>
<feature type="active site" description="Proton donor" evidence="1">
    <location>
        <position position="344"/>
    </location>
</feature>
<feature type="binding site" evidence="1">
    <location>
        <position position="251"/>
    </location>
    <ligand>
        <name>substrate</name>
    </ligand>
</feature>
<feature type="binding site" evidence="1">
    <location>
        <position position="268"/>
    </location>
    <ligand>
        <name>substrate</name>
    </ligand>
</feature>
<feature type="binding site" evidence="1">
    <location>
        <position position="396"/>
    </location>
    <ligand>
        <name>substrate</name>
    </ligand>
</feature>
<feature type="binding site" evidence="1">
    <location>
        <position position="462"/>
    </location>
    <ligand>
        <name>substrate</name>
    </ligand>
</feature>
<comment type="function">
    <text evidence="1 2">Catalyzes the formation of branch points in alpha-glucans by cleavage of an alpha-1,4 glycosidic bond and subsequent transfer of the cleaved-off oligosaccharide to a new alpha-1,6 position (Probable). Is probably involved in the biosynthesis of 6-O-methylglucosyl lipopolysaccharides (MGLP) (By similarity).</text>
</comment>
<comment type="catalytic activity">
    <reaction>
        <text>Transfers a segment of a (1-&gt;4)-alpha-D-glucan chain to a primary hydroxy group in a similar glucan chain.</text>
        <dbReference type="EC" id="2.4.1.18"/>
    </reaction>
</comment>
<comment type="similarity">
    <text evidence="2">Belongs to the glycosyl hydrolase 57 family.</text>
</comment>
<dbReference type="EC" id="2.4.1.18"/>
<dbReference type="EMBL" id="AE000516">
    <property type="protein sequence ID" value="AAK47445.1"/>
    <property type="molecule type" value="Genomic_DNA"/>
</dbReference>
<dbReference type="PIR" id="B70859">
    <property type="entry name" value="B70859"/>
</dbReference>
<dbReference type="RefSeq" id="WP_003899891.1">
    <property type="nucleotide sequence ID" value="NZ_KK341227.1"/>
</dbReference>
<dbReference type="SMR" id="P9WQ26"/>
<dbReference type="CAZy" id="GH57">
    <property type="family name" value="Glycoside Hydrolase Family 57"/>
</dbReference>
<dbReference type="KEGG" id="mtc:MT3115"/>
<dbReference type="PATRIC" id="fig|83331.31.peg.3357"/>
<dbReference type="HOGENOM" id="CLU_008192_1_0_11"/>
<dbReference type="Proteomes" id="UP000001020">
    <property type="component" value="Chromosome"/>
</dbReference>
<dbReference type="GO" id="GO:0005576">
    <property type="term" value="C:extracellular region"/>
    <property type="evidence" value="ECO:0007669"/>
    <property type="project" value="TreeGrafter"/>
</dbReference>
<dbReference type="GO" id="GO:0003844">
    <property type="term" value="F:1,4-alpha-glucan branching enzyme activity"/>
    <property type="evidence" value="ECO:0007669"/>
    <property type="project" value="UniProtKB-EC"/>
</dbReference>
<dbReference type="GO" id="GO:0030979">
    <property type="term" value="P:alpha-glucan biosynthetic process"/>
    <property type="evidence" value="ECO:0007669"/>
    <property type="project" value="InterPro"/>
</dbReference>
<dbReference type="FunFam" id="1.20.1430.10:FF:000001">
    <property type="entry name" value="1,4-alpha-glucan branching enzyme TK1436"/>
    <property type="match status" value="1"/>
</dbReference>
<dbReference type="FunFam" id="3.20.110.10:FF:000009">
    <property type="entry name" value="1,4-alpha-glucan branching enzyme TK1436"/>
    <property type="match status" value="1"/>
</dbReference>
<dbReference type="Gene3D" id="1.20.1430.10">
    <property type="entry name" value="Families 57/38 glycoside transferase, middle domain"/>
    <property type="match status" value="1"/>
</dbReference>
<dbReference type="Gene3D" id="3.20.110.10">
    <property type="entry name" value="Glycoside hydrolase 38, N terminal domain"/>
    <property type="match status" value="1"/>
</dbReference>
<dbReference type="InterPro" id="IPR037090">
    <property type="entry name" value="57_glycoside_trans_central"/>
</dbReference>
<dbReference type="InterPro" id="IPR015293">
    <property type="entry name" value="BE_C"/>
</dbReference>
<dbReference type="InterPro" id="IPR040042">
    <property type="entry name" value="Branching_enz_MT3115-like"/>
</dbReference>
<dbReference type="InterPro" id="IPR011330">
    <property type="entry name" value="Glyco_hydro/deAcase_b/a-brl"/>
</dbReference>
<dbReference type="InterPro" id="IPR027291">
    <property type="entry name" value="Glyco_hydro_38_N_sf"/>
</dbReference>
<dbReference type="InterPro" id="IPR028995">
    <property type="entry name" value="Glyco_hydro_57/38_cen_sf"/>
</dbReference>
<dbReference type="InterPro" id="IPR004300">
    <property type="entry name" value="Glyco_hydro_57_N"/>
</dbReference>
<dbReference type="PANTHER" id="PTHR41695">
    <property type="entry name" value="1,4-ALPHA-GLUCAN BRANCHING ENZYME RV3031-RELATED"/>
    <property type="match status" value="1"/>
</dbReference>
<dbReference type="PANTHER" id="PTHR41695:SF1">
    <property type="entry name" value="1,4-ALPHA-GLUCAN BRANCHING ENZYME TK1436"/>
    <property type="match status" value="1"/>
</dbReference>
<dbReference type="Pfam" id="PF09210">
    <property type="entry name" value="BE_C"/>
    <property type="match status" value="1"/>
</dbReference>
<dbReference type="Pfam" id="PF03065">
    <property type="entry name" value="Glyco_hydro_57"/>
    <property type="match status" value="1"/>
</dbReference>
<dbReference type="SUPFAM" id="SSF88688">
    <property type="entry name" value="Families 57/38 glycoside transferase middle domain"/>
    <property type="match status" value="1"/>
</dbReference>
<dbReference type="SUPFAM" id="SSF88713">
    <property type="entry name" value="Glycoside hydrolase/deacetylase"/>
    <property type="match status" value="1"/>
</dbReference>
<name>BE_MYCTO</name>
<protein>
    <recommendedName>
        <fullName>Probable 1,4-alpha-glucan branching enzyme MT3115</fullName>
        <ecNumber>2.4.1.18</ecNumber>
    </recommendedName>
    <alternativeName>
        <fullName>1,4-alpha-D-glucan:1,4-alpha-D-glucan 6-glucosyl-transferase</fullName>
    </alternativeName>
    <alternativeName>
        <fullName>Alpha-(1-&gt;4)-glucan branching enzyme</fullName>
    </alternativeName>
    <alternativeName>
        <fullName>Branching enzyme</fullName>
        <shortName>BE</shortName>
    </alternativeName>
</protein>
<sequence length="526" mass="57815">MNTSASPVPGLFTLVLHTHLPWLAHHGRWPVGEEWLYQSWAAAYLPLLQVLAALADENRHRLITLGMTPVVNAQLDDPYCLNGVHHWLANWQLRAEEAASVRYARQSKSADYPSCTPEALRAFGIRECADAARALDNFATRWRHGGSPLLRGLIDAGTVELLGGPLAHPFQPLLAPRLREFALREGLADAQLRLAHRPKGIWAPECAYAPGMEVDYATAGVSHFMVDGPSLHGDTALGRPVGKTDVVAFGRDLQVSYRVWSPKSGYPGHAAYRDFHTYDHLTGLKPARVTGRNVPSEQKAPYDPERADRAVDVHVADFVDVVRNRLLSESERIGRPAHVIAAFDTELFGHWWYEGPTWLQRVLRALPAAGVRVGTLSDAIADGFVGDPVELPPSSWGSGKDWQVWSGAKVADLVQLNSEVVDTALTTIDKALAQTASLDGPLPRDHVADQILRETLLTVSSDWPFMVSKDSAADYARYRAHLHAHATREIAGALAAGRRDTARRLAEGWNRADGLFGALDARRLPK</sequence>